<keyword id="KW-0325">Glycoprotein</keyword>
<keyword id="KW-0472">Membrane</keyword>
<keyword id="KW-1185">Reference proteome</keyword>
<keyword id="KW-0812">Transmembrane</keyword>
<keyword id="KW-1133">Transmembrane helix</keyword>
<keyword id="KW-0813">Transport</keyword>
<sequence length="542" mass="59983">MGNQSLVVLTESKGEYENETELPVKKSSRDNNIGESLTATAFTQSEDEMVDSNQKWQNPNYFKYAWQEYLFIFTCMISQLLNQAGTTQTLSIMNILSDSFGSEGNSKSWLMASFPLVSGSFILISGRLGDIYGLKKMLLVGYVLVIIWSLICGITKYSGSDTFFIISRAFQGLGIAFVLPNVLGIIGNIYVGGTFRKNIVISFVGAMAPIGATLGCLFAGLIGTEDPKQWPWAFYAYSIAAFINFVLSIYAIPSTIPTNIHHFSMDWIGSVLGVIGLILLNFVWNQAPISGWNQAYIIVILIISVIFLVVFIIYEIRFAKTPLLPRAVIKDRHMIQIMLALFFGWGSFGIFTFYYFQFQLNIRQYTALWAGGTYFMFLIWGIIAALLVGFTIKNVSPSVFLFFSMVAFNVGSIMASVTPVHETYFRTQLGTMIILSFGMDLSFPASSIIFSDNLPMEYQGMAGSLVNTVVNYSMSLCLGMGATVETQVNSDGKHLLKGYRGAQYLGIGLASLACMISGLYMVESFIKGRRARAAAEYDCTVA</sequence>
<reference key="1">
    <citation type="journal article" date="1988" name="Mol. Cell. Biol.">
        <title>ATR1, a Saccharomyces cerevisiae gene encoding a transmembrane protein required for aminotriazole resistance.</title>
        <authorList>
            <person name="Kanazawa S."/>
            <person name="Driscoll M."/>
            <person name="Struhl K."/>
        </authorList>
    </citation>
    <scope>NUCLEOTIDE SEQUENCE [GENOMIC DNA]</scope>
</reference>
<reference key="2">
    <citation type="journal article" date="1997" name="Nature">
        <title>The nucleotide sequence of Saccharomyces cerevisiae chromosome XIII.</title>
        <authorList>
            <person name="Bowman S."/>
            <person name="Churcher C.M."/>
            <person name="Badcock K."/>
            <person name="Brown D."/>
            <person name="Chillingworth T."/>
            <person name="Connor R."/>
            <person name="Dedman K."/>
            <person name="Devlin K."/>
            <person name="Gentles S."/>
            <person name="Hamlin N."/>
            <person name="Hunt S."/>
            <person name="Jagels K."/>
            <person name="Lye G."/>
            <person name="Moule S."/>
            <person name="Odell C."/>
            <person name="Pearson D."/>
            <person name="Rajandream M.A."/>
            <person name="Rice P."/>
            <person name="Skelton J."/>
            <person name="Walsh S.V."/>
            <person name="Whitehead S."/>
            <person name="Barrell B.G."/>
        </authorList>
    </citation>
    <scope>NUCLEOTIDE SEQUENCE [LARGE SCALE GENOMIC DNA]</scope>
    <source>
        <strain>ATCC 204508 / S288c</strain>
    </source>
</reference>
<reference key="3">
    <citation type="journal article" date="2014" name="G3 (Bethesda)">
        <title>The reference genome sequence of Saccharomyces cerevisiae: Then and now.</title>
        <authorList>
            <person name="Engel S.R."/>
            <person name="Dietrich F.S."/>
            <person name="Fisk D.G."/>
            <person name="Binkley G."/>
            <person name="Balakrishnan R."/>
            <person name="Costanzo M.C."/>
            <person name="Dwight S.S."/>
            <person name="Hitz B.C."/>
            <person name="Karra K."/>
            <person name="Nash R.S."/>
            <person name="Weng S."/>
            <person name="Wong E.D."/>
            <person name="Lloyd P."/>
            <person name="Skrzypek M.S."/>
            <person name="Miyasato S.R."/>
            <person name="Simison M."/>
            <person name="Cherry J.M."/>
        </authorList>
    </citation>
    <scope>GENOME REANNOTATION</scope>
    <source>
        <strain>ATCC 204508 / S288c</strain>
    </source>
</reference>
<reference key="4">
    <citation type="journal article" date="2007" name="Genome Res.">
        <title>Approaching a complete repository of sequence-verified protein-encoding clones for Saccharomyces cerevisiae.</title>
        <authorList>
            <person name="Hu Y."/>
            <person name="Rolfs A."/>
            <person name="Bhullar B."/>
            <person name="Murthy T.V.S."/>
            <person name="Zhu C."/>
            <person name="Berger M.F."/>
            <person name="Camargo A.A."/>
            <person name="Kelley F."/>
            <person name="McCarron S."/>
            <person name="Jepson D."/>
            <person name="Richardson A."/>
            <person name="Raphael J."/>
            <person name="Moreira D."/>
            <person name="Taycher E."/>
            <person name="Zuo D."/>
            <person name="Mohr S."/>
            <person name="Kane M.F."/>
            <person name="Williamson J."/>
            <person name="Simpson A.J.G."/>
            <person name="Bulyk M.L."/>
            <person name="Harlow E."/>
            <person name="Marsischky G."/>
            <person name="Kolodner R.D."/>
            <person name="LaBaer J."/>
        </authorList>
    </citation>
    <scope>NUCLEOTIDE SEQUENCE [GENOMIC DNA]</scope>
    <source>
        <strain>ATCC 204508 / S288c</strain>
    </source>
</reference>
<reference key="5">
    <citation type="journal article" date="1990" name="Curr. Genet.">
        <title>Allelism of SNQ1 and ATR1, genes of the yeast Saccharomyces cerevisiae required for controlling sensitivity to 4-nitroquinoline-N-oxide and aminotriazole.</title>
        <authorList>
            <person name="Goempel-Klein P."/>
            <person name="Brendel M."/>
        </authorList>
    </citation>
    <scope>CHARACTERIZATION</scope>
</reference>
<reference key="6">
    <citation type="journal article" date="2003" name="Nature">
        <title>Global analysis of protein expression in yeast.</title>
        <authorList>
            <person name="Ghaemmaghami S."/>
            <person name="Huh W.-K."/>
            <person name="Bower K."/>
            <person name="Howson R.W."/>
            <person name="Belle A."/>
            <person name="Dephoure N."/>
            <person name="O'Shea E.K."/>
            <person name="Weissman J.S."/>
        </authorList>
    </citation>
    <scope>LEVEL OF PROTEIN EXPRESSION [LARGE SCALE ANALYSIS]</scope>
</reference>
<reference key="7">
    <citation type="journal article" date="2006" name="Proc. Natl. Acad. Sci. U.S.A.">
        <title>A global topology map of the Saccharomyces cerevisiae membrane proteome.</title>
        <authorList>
            <person name="Kim H."/>
            <person name="Melen K."/>
            <person name="Oesterberg M."/>
            <person name="von Heijne G."/>
        </authorList>
    </citation>
    <scope>TOPOLOGY [LARGE SCALE ANALYSIS]</scope>
    <source>
        <strain>ATCC 208353 / W303-1A</strain>
    </source>
</reference>
<reference key="8">
    <citation type="journal article" date="2008" name="Mol. Cell. Proteomics">
        <title>A multidimensional chromatography technology for in-depth phosphoproteome analysis.</title>
        <authorList>
            <person name="Albuquerque C.P."/>
            <person name="Smolka M.B."/>
            <person name="Payne S.H."/>
            <person name="Bafna V."/>
            <person name="Eng J."/>
            <person name="Zhou H."/>
        </authorList>
    </citation>
    <scope>IDENTIFICATION BY MASS SPECTROMETRY [LARGE SCALE ANALYSIS]</scope>
</reference>
<proteinExistence type="evidence at protein level"/>
<organism>
    <name type="scientific">Saccharomyces cerevisiae (strain ATCC 204508 / S288c)</name>
    <name type="common">Baker's yeast</name>
    <dbReference type="NCBI Taxonomy" id="559292"/>
    <lineage>
        <taxon>Eukaryota</taxon>
        <taxon>Fungi</taxon>
        <taxon>Dikarya</taxon>
        <taxon>Ascomycota</taxon>
        <taxon>Saccharomycotina</taxon>
        <taxon>Saccharomycetes</taxon>
        <taxon>Saccharomycetales</taxon>
        <taxon>Saccharomycetaceae</taxon>
        <taxon>Saccharomyces</taxon>
    </lineage>
</organism>
<gene>
    <name type="primary">ATR1</name>
    <name type="synonym">SNQ1</name>
    <name type="ordered locus">YML116W</name>
    <name type="ORF">YM8339.03</name>
</gene>
<evidence type="ECO:0000255" key="1"/>
<evidence type="ECO:0000269" key="2">
    <source>
    </source>
</evidence>
<evidence type="ECO:0000305" key="3"/>
<feature type="chain" id="PRO_0000173367" description="Aminotriazole resistance protein">
    <location>
        <begin position="1"/>
        <end position="542"/>
    </location>
</feature>
<feature type="topological domain" description="Cytoplasmic" evidence="1">
    <location>
        <begin position="1"/>
        <end position="108"/>
    </location>
</feature>
<feature type="transmembrane region" description="Helical" evidence="1">
    <location>
        <begin position="109"/>
        <end position="129"/>
    </location>
</feature>
<feature type="topological domain" description="Extracellular" evidence="1">
    <location>
        <begin position="130"/>
        <end position="136"/>
    </location>
</feature>
<feature type="transmembrane region" description="Helical" evidence="1">
    <location>
        <begin position="137"/>
        <end position="157"/>
    </location>
</feature>
<feature type="topological domain" description="Cytoplasmic" evidence="1">
    <location>
        <begin position="158"/>
        <end position="172"/>
    </location>
</feature>
<feature type="transmembrane region" description="Helical" evidence="1">
    <location>
        <begin position="173"/>
        <end position="193"/>
    </location>
</feature>
<feature type="topological domain" description="Extracellular" evidence="1">
    <location>
        <begin position="194"/>
        <end position="198"/>
    </location>
</feature>
<feature type="transmembrane region" description="Helical" evidence="1">
    <location>
        <begin position="199"/>
        <end position="219"/>
    </location>
</feature>
<feature type="topological domain" description="Cytoplasmic" evidence="1">
    <location>
        <begin position="220"/>
        <end position="231"/>
    </location>
</feature>
<feature type="transmembrane region" description="Helical" evidence="1">
    <location>
        <begin position="232"/>
        <end position="252"/>
    </location>
</feature>
<feature type="topological domain" description="Extracellular" evidence="1">
    <location>
        <begin position="253"/>
        <end position="262"/>
    </location>
</feature>
<feature type="transmembrane region" description="Helical" evidence="1">
    <location>
        <begin position="263"/>
        <end position="283"/>
    </location>
</feature>
<feature type="topological domain" description="Cytoplasmic" evidence="1">
    <location>
        <begin position="284"/>
        <end position="295"/>
    </location>
</feature>
<feature type="transmembrane region" description="Helical" evidence="1">
    <location>
        <begin position="296"/>
        <end position="316"/>
    </location>
</feature>
<feature type="topological domain" description="Extracellular" evidence="1">
    <location>
        <begin position="317"/>
        <end position="333"/>
    </location>
</feature>
<feature type="transmembrane region" description="Helical" evidence="1">
    <location>
        <begin position="334"/>
        <end position="354"/>
    </location>
</feature>
<feature type="topological domain" description="Cytoplasmic" evidence="1">
    <location>
        <begin position="355"/>
        <end position="371"/>
    </location>
</feature>
<feature type="transmembrane region" description="Helical" evidence="1">
    <location>
        <begin position="372"/>
        <end position="392"/>
    </location>
</feature>
<feature type="topological domain" description="Extracellular" evidence="1">
    <location>
        <begin position="393"/>
        <end position="399"/>
    </location>
</feature>
<feature type="transmembrane region" description="Helical" evidence="1">
    <location>
        <begin position="400"/>
        <end position="420"/>
    </location>
</feature>
<feature type="topological domain" description="Cytoplasmic" evidence="1">
    <location>
        <begin position="421"/>
        <end position="429"/>
    </location>
</feature>
<feature type="transmembrane region" description="Helical" evidence="1">
    <location>
        <begin position="430"/>
        <end position="450"/>
    </location>
</feature>
<feature type="topological domain" description="Extracellular" evidence="1">
    <location>
        <begin position="451"/>
        <end position="505"/>
    </location>
</feature>
<feature type="transmembrane region" description="Helical" evidence="1">
    <location>
        <begin position="506"/>
        <end position="526"/>
    </location>
</feature>
<feature type="topological domain" description="Cytoplasmic" evidence="1">
    <location>
        <begin position="527"/>
        <end position="542"/>
    </location>
</feature>
<feature type="glycosylation site" description="N-linked (GlcNAc...) asparagine" evidence="1">
    <location>
        <position position="471"/>
    </location>
</feature>
<feature type="sequence conflict" description="In Ref. 1; AAA34449." evidence="3" ref="1">
    <original>ARAAAEYDCTVA</original>
    <variation>QELLQNTIALWLSGKRY</variation>
    <location>
        <begin position="531"/>
        <end position="542"/>
    </location>
</feature>
<dbReference type="EMBL" id="M20319">
    <property type="protein sequence ID" value="AAA34449.1"/>
    <property type="molecule type" value="Genomic_DNA"/>
</dbReference>
<dbReference type="EMBL" id="Z49210">
    <property type="protein sequence ID" value="CAA89102.1"/>
    <property type="molecule type" value="Genomic_DNA"/>
</dbReference>
<dbReference type="EMBL" id="AY723850">
    <property type="protein sequence ID" value="AAU09767.1"/>
    <property type="molecule type" value="Genomic_DNA"/>
</dbReference>
<dbReference type="EMBL" id="BK006946">
    <property type="protein sequence ID" value="DAA09782.1"/>
    <property type="molecule type" value="Genomic_DNA"/>
</dbReference>
<dbReference type="PIR" id="S53956">
    <property type="entry name" value="S53956"/>
</dbReference>
<dbReference type="RefSeq" id="NP_013591.1">
    <property type="nucleotide sequence ID" value="NM_001182478.1"/>
</dbReference>
<dbReference type="SMR" id="P13090"/>
<dbReference type="BioGRID" id="35088">
    <property type="interactions" value="26"/>
</dbReference>
<dbReference type="DIP" id="DIP-3953N"/>
<dbReference type="FunCoup" id="P13090">
    <property type="interactions" value="61"/>
</dbReference>
<dbReference type="IntAct" id="P13090">
    <property type="interactions" value="5"/>
</dbReference>
<dbReference type="MINT" id="P13090"/>
<dbReference type="STRING" id="4932.YML116W"/>
<dbReference type="TCDB" id="2.A.1.3.1">
    <property type="family name" value="the major facilitator superfamily (mfs)"/>
</dbReference>
<dbReference type="GlyCosmos" id="P13090">
    <property type="glycosylation" value="1 site, No reported glycans"/>
</dbReference>
<dbReference type="GlyGen" id="P13090">
    <property type="glycosylation" value="1 site"/>
</dbReference>
<dbReference type="iPTMnet" id="P13090"/>
<dbReference type="PaxDb" id="4932-YML116W"/>
<dbReference type="PeptideAtlas" id="P13090"/>
<dbReference type="EnsemblFungi" id="YML116W_mRNA">
    <property type="protein sequence ID" value="YML116W"/>
    <property type="gene ID" value="YML116W"/>
</dbReference>
<dbReference type="GeneID" id="854924"/>
<dbReference type="KEGG" id="sce:YML116W"/>
<dbReference type="AGR" id="SGD:S000004584"/>
<dbReference type="SGD" id="S000004584">
    <property type="gene designation" value="ATR1"/>
</dbReference>
<dbReference type="VEuPathDB" id="FungiDB:YML116W"/>
<dbReference type="eggNOG" id="KOG0254">
    <property type="taxonomic scope" value="Eukaryota"/>
</dbReference>
<dbReference type="GeneTree" id="ENSGT00940000176573"/>
<dbReference type="HOGENOM" id="CLU_000960_27_4_1"/>
<dbReference type="InParanoid" id="P13090"/>
<dbReference type="OMA" id="MLPWTGM"/>
<dbReference type="OrthoDB" id="2130629at2759"/>
<dbReference type="BioCyc" id="YEAST:G3O-32697-MONOMER"/>
<dbReference type="BioGRID-ORCS" id="854924">
    <property type="hits" value="0 hits in 10 CRISPR screens"/>
</dbReference>
<dbReference type="PRO" id="PR:P13090"/>
<dbReference type="Proteomes" id="UP000002311">
    <property type="component" value="Chromosome XIII"/>
</dbReference>
<dbReference type="RNAct" id="P13090">
    <property type="molecule type" value="protein"/>
</dbReference>
<dbReference type="GO" id="GO:0071944">
    <property type="term" value="C:cell periphery"/>
    <property type="evidence" value="ECO:0007005"/>
    <property type="project" value="SGD"/>
</dbReference>
<dbReference type="GO" id="GO:0016020">
    <property type="term" value="C:membrane"/>
    <property type="evidence" value="ECO:0000318"/>
    <property type="project" value="GO_Central"/>
</dbReference>
<dbReference type="GO" id="GO:0005886">
    <property type="term" value="C:plasma membrane"/>
    <property type="evidence" value="ECO:0000314"/>
    <property type="project" value="SGD"/>
</dbReference>
<dbReference type="GO" id="GO:0005773">
    <property type="term" value="C:vacuole"/>
    <property type="evidence" value="ECO:0000314"/>
    <property type="project" value="SGD"/>
</dbReference>
<dbReference type="GO" id="GO:0080139">
    <property type="term" value="F:borate efflux transmembrane transporter activity"/>
    <property type="evidence" value="ECO:0000315"/>
    <property type="project" value="SGD"/>
</dbReference>
<dbReference type="GO" id="GO:0046713">
    <property type="term" value="P:borate transport"/>
    <property type="evidence" value="ECO:0000315"/>
    <property type="project" value="SGD"/>
</dbReference>
<dbReference type="CDD" id="cd17476">
    <property type="entry name" value="MFS_Amf1_MDR_like"/>
    <property type="match status" value="1"/>
</dbReference>
<dbReference type="FunFam" id="1.20.1250.20:FF:000397">
    <property type="entry name" value="Aminotriazole resistance protein"/>
    <property type="match status" value="1"/>
</dbReference>
<dbReference type="FunFam" id="1.20.1250.20:FF:000433">
    <property type="entry name" value="Aminotriazole resistance protein"/>
    <property type="match status" value="1"/>
</dbReference>
<dbReference type="Gene3D" id="1.20.1250.20">
    <property type="entry name" value="MFS general substrate transporter like domains"/>
    <property type="match status" value="2"/>
</dbReference>
<dbReference type="InterPro" id="IPR011701">
    <property type="entry name" value="MFS"/>
</dbReference>
<dbReference type="InterPro" id="IPR020846">
    <property type="entry name" value="MFS_dom"/>
</dbReference>
<dbReference type="InterPro" id="IPR036259">
    <property type="entry name" value="MFS_trans_sf"/>
</dbReference>
<dbReference type="PANTHER" id="PTHR42718:SF14">
    <property type="entry name" value="AMINOTRIAZOLE RESISTANCE PROTEIN"/>
    <property type="match status" value="1"/>
</dbReference>
<dbReference type="PANTHER" id="PTHR42718">
    <property type="entry name" value="MAJOR FACILITATOR SUPERFAMILY MULTIDRUG TRANSPORTER MFSC"/>
    <property type="match status" value="1"/>
</dbReference>
<dbReference type="Pfam" id="PF07690">
    <property type="entry name" value="MFS_1"/>
    <property type="match status" value="1"/>
</dbReference>
<dbReference type="SUPFAM" id="SSF103473">
    <property type="entry name" value="MFS general substrate transporter"/>
    <property type="match status" value="1"/>
</dbReference>
<dbReference type="PROSITE" id="PS50850">
    <property type="entry name" value="MFS"/>
    <property type="match status" value="1"/>
</dbReference>
<accession>P13090</accession>
<accession>D6W0G8</accession>
<protein>
    <recommendedName>
        <fullName>Aminotriazole resistance protein</fullName>
    </recommendedName>
</protein>
<comment type="function">
    <text>Putative component of the machinery responsible for pumping aminotriazole (and possibly other toxic compounds) out of the cell. Probable ATP-dependent export permease. Appears to confer resistance only to aminotriazole.</text>
</comment>
<comment type="subcellular location">
    <subcellularLocation>
        <location>Membrane</location>
        <topology>Multi-pass membrane protein</topology>
    </subcellularLocation>
</comment>
<comment type="domain">
    <text>Deletion of the C-terminal 34 residues abolishes ATR1 activity, while deletion of the C-terminal 23 residues have a minor effect.</text>
</comment>
<comment type="miscellaneous">
    <text evidence="2">Present with 1720 molecules/cell in log phase SD medium.</text>
</comment>
<comment type="similarity">
    <text evidence="3">Belongs to the major facilitator superfamily.</text>
</comment>
<name>ATR1_YEAST</name>